<proteinExistence type="inferred from homology"/>
<organism>
    <name type="scientific">Staphylococcus aureus (strain JH9)</name>
    <dbReference type="NCBI Taxonomy" id="359786"/>
    <lineage>
        <taxon>Bacteria</taxon>
        <taxon>Bacillati</taxon>
        <taxon>Bacillota</taxon>
        <taxon>Bacilli</taxon>
        <taxon>Bacillales</taxon>
        <taxon>Staphylococcaceae</taxon>
        <taxon>Staphylococcus</taxon>
    </lineage>
</organism>
<gene>
    <name type="primary">nreC</name>
    <name type="ordered locus">SaurJH9_2415</name>
</gene>
<protein>
    <recommendedName>
        <fullName>Oxygen regulatory protein NreC</fullName>
    </recommendedName>
    <alternativeName>
        <fullName>Nitrogen regulation protein C</fullName>
    </alternativeName>
</protein>
<name>NREC_STAA9</name>
<sequence>MKIVIADDHAVVRTGFSMILNYQNDMEVVATAADGVEAYQKVMEYKPDVLLMDLSMPPGESGLIATSKIADSFPETKILILTMFDDEEYLFHVLRNGAKGYILKNAPDEQLLLAIRTVYKGETYVDMKLTTSLVNEFVSNSNQDTANTTDPFKILSKRELEILPLIAKGYGNKEIAEKLFVSVKTVEAHKTHIMTKLGLKSKPELVEYALKKKLLEF</sequence>
<keyword id="KW-0010">Activator</keyword>
<keyword id="KW-0963">Cytoplasm</keyword>
<keyword id="KW-0238">DNA-binding</keyword>
<keyword id="KW-0597">Phosphoprotein</keyword>
<keyword id="KW-0804">Transcription</keyword>
<keyword id="KW-0805">Transcription regulation</keyword>
<keyword id="KW-0902">Two-component regulatory system</keyword>
<reference key="1">
    <citation type="submission" date="2007-05" db="EMBL/GenBank/DDBJ databases">
        <title>Complete sequence of chromosome of Staphylococcus aureus subsp. aureus JH9.</title>
        <authorList>
            <consortium name="US DOE Joint Genome Institute"/>
            <person name="Copeland A."/>
            <person name="Lucas S."/>
            <person name="Lapidus A."/>
            <person name="Barry K."/>
            <person name="Detter J.C."/>
            <person name="Glavina del Rio T."/>
            <person name="Hammon N."/>
            <person name="Israni S."/>
            <person name="Pitluck S."/>
            <person name="Chain P."/>
            <person name="Malfatti S."/>
            <person name="Shin M."/>
            <person name="Vergez L."/>
            <person name="Schmutz J."/>
            <person name="Larimer F."/>
            <person name="Land M."/>
            <person name="Hauser L."/>
            <person name="Kyrpides N."/>
            <person name="Kim E."/>
            <person name="Tomasz A."/>
            <person name="Richardson P."/>
        </authorList>
    </citation>
    <scope>NUCLEOTIDE SEQUENCE [LARGE SCALE GENOMIC DNA]</scope>
    <source>
        <strain>JH9</strain>
    </source>
</reference>
<dbReference type="EMBL" id="CP000703">
    <property type="protein sequence ID" value="ABQ50195.1"/>
    <property type="molecule type" value="Genomic_DNA"/>
</dbReference>
<dbReference type="RefSeq" id="WP_000706315.1">
    <property type="nucleotide sequence ID" value="NC_009487.1"/>
</dbReference>
<dbReference type="SMR" id="A5IVH2"/>
<dbReference type="KEGG" id="saj:SaurJH9_2415"/>
<dbReference type="HOGENOM" id="CLU_000445_90_1_9"/>
<dbReference type="GO" id="GO:0005737">
    <property type="term" value="C:cytoplasm"/>
    <property type="evidence" value="ECO:0007669"/>
    <property type="project" value="UniProtKB-SubCell"/>
</dbReference>
<dbReference type="GO" id="GO:0003677">
    <property type="term" value="F:DNA binding"/>
    <property type="evidence" value="ECO:0007669"/>
    <property type="project" value="UniProtKB-KW"/>
</dbReference>
<dbReference type="GO" id="GO:0000160">
    <property type="term" value="P:phosphorelay signal transduction system"/>
    <property type="evidence" value="ECO:0007669"/>
    <property type="project" value="UniProtKB-KW"/>
</dbReference>
<dbReference type="GO" id="GO:0006355">
    <property type="term" value="P:regulation of DNA-templated transcription"/>
    <property type="evidence" value="ECO:0007669"/>
    <property type="project" value="InterPro"/>
</dbReference>
<dbReference type="CDD" id="cd06170">
    <property type="entry name" value="LuxR_C_like"/>
    <property type="match status" value="1"/>
</dbReference>
<dbReference type="CDD" id="cd17535">
    <property type="entry name" value="REC_NarL-like"/>
    <property type="match status" value="1"/>
</dbReference>
<dbReference type="Gene3D" id="3.40.50.2300">
    <property type="match status" value="1"/>
</dbReference>
<dbReference type="InterPro" id="IPR011006">
    <property type="entry name" value="CheY-like_superfamily"/>
</dbReference>
<dbReference type="InterPro" id="IPR016032">
    <property type="entry name" value="Sig_transdc_resp-reg_C-effctor"/>
</dbReference>
<dbReference type="InterPro" id="IPR001789">
    <property type="entry name" value="Sig_transdc_resp-reg_receiver"/>
</dbReference>
<dbReference type="InterPro" id="IPR000792">
    <property type="entry name" value="Tscrpt_reg_LuxR_C"/>
</dbReference>
<dbReference type="InterPro" id="IPR039420">
    <property type="entry name" value="WalR-like"/>
</dbReference>
<dbReference type="PANTHER" id="PTHR43214:SF37">
    <property type="entry name" value="TRANSCRIPTIONAL REGULATORY PROTEIN YDFI"/>
    <property type="match status" value="1"/>
</dbReference>
<dbReference type="PANTHER" id="PTHR43214">
    <property type="entry name" value="TWO-COMPONENT RESPONSE REGULATOR"/>
    <property type="match status" value="1"/>
</dbReference>
<dbReference type="Pfam" id="PF00196">
    <property type="entry name" value="GerE"/>
    <property type="match status" value="1"/>
</dbReference>
<dbReference type="Pfam" id="PF00072">
    <property type="entry name" value="Response_reg"/>
    <property type="match status" value="1"/>
</dbReference>
<dbReference type="PRINTS" id="PR00038">
    <property type="entry name" value="HTHLUXR"/>
</dbReference>
<dbReference type="SMART" id="SM00421">
    <property type="entry name" value="HTH_LUXR"/>
    <property type="match status" value="1"/>
</dbReference>
<dbReference type="SMART" id="SM00448">
    <property type="entry name" value="REC"/>
    <property type="match status" value="1"/>
</dbReference>
<dbReference type="SUPFAM" id="SSF46894">
    <property type="entry name" value="C-terminal effector domain of the bipartite response regulators"/>
    <property type="match status" value="1"/>
</dbReference>
<dbReference type="SUPFAM" id="SSF52172">
    <property type="entry name" value="CheY-like"/>
    <property type="match status" value="1"/>
</dbReference>
<dbReference type="PROSITE" id="PS00622">
    <property type="entry name" value="HTH_LUXR_1"/>
    <property type="match status" value="1"/>
</dbReference>
<dbReference type="PROSITE" id="PS50043">
    <property type="entry name" value="HTH_LUXR_2"/>
    <property type="match status" value="1"/>
</dbReference>
<dbReference type="PROSITE" id="PS50110">
    <property type="entry name" value="RESPONSE_REGULATORY"/>
    <property type="match status" value="1"/>
</dbReference>
<comment type="function">
    <text evidence="1">Member of the two-component regulatory system NreB/NreC involved in the control of dissimilatory nitrate/nitrite reduction in response to oxygen. Phosphorylated NreC binds to a GC-rich palindromic sequence at the promoters of the nitrate (narGHJI) and nitrite (nir) reductase operons, as well as the putative nitrate transporter gene narT, and activates their expression (By similarity).</text>
</comment>
<comment type="subcellular location">
    <subcellularLocation>
        <location evidence="4">Cytoplasm</location>
    </subcellularLocation>
</comment>
<comment type="PTM">
    <text evidence="1">Phosphorylated by NreB.</text>
</comment>
<feature type="chain" id="PRO_0000349345" description="Oxygen regulatory protein NreC">
    <location>
        <begin position="1"/>
        <end position="217"/>
    </location>
</feature>
<feature type="domain" description="Response regulatory" evidence="2">
    <location>
        <begin position="2"/>
        <end position="119"/>
    </location>
</feature>
<feature type="domain" description="HTH luxR-type" evidence="3">
    <location>
        <begin position="148"/>
        <end position="213"/>
    </location>
</feature>
<feature type="DNA-binding region" description="H-T-H motif" evidence="3">
    <location>
        <begin position="172"/>
        <end position="191"/>
    </location>
</feature>
<feature type="modified residue" description="4-aspartylphosphate" evidence="2">
    <location>
        <position position="53"/>
    </location>
</feature>
<evidence type="ECO:0000250" key="1"/>
<evidence type="ECO:0000255" key="2">
    <source>
        <dbReference type="PROSITE-ProRule" id="PRU00169"/>
    </source>
</evidence>
<evidence type="ECO:0000255" key="3">
    <source>
        <dbReference type="PROSITE-ProRule" id="PRU00411"/>
    </source>
</evidence>
<evidence type="ECO:0000305" key="4"/>
<accession>A5IVH2</accession>